<sequence>MPRKLPSSPKTSALQLGRAVAWPGSPEEAKLDRVPNPQKGTNYVARFTAPEFTTLCPVTGQPDFAHLVIDYVPGSWLLESKSLKLYLASFRNHGAFHEDCTVAIGKRIATAVRPKWLRIGGYWYPRGGIPIDVFWQTGTVPKGVWIPDQSVPAYRGRG</sequence>
<feature type="chain" id="PRO_1000062397" description="NADPH-dependent 7-cyano-7-deazaguanine reductase">
    <location>
        <begin position="1"/>
        <end position="158"/>
    </location>
</feature>
<feature type="active site" description="Thioimide intermediate" evidence="1">
    <location>
        <position position="56"/>
    </location>
</feature>
<feature type="active site" description="Proton donor" evidence="1">
    <location>
        <position position="63"/>
    </location>
</feature>
<feature type="binding site" evidence="1">
    <location>
        <begin position="78"/>
        <end position="80"/>
    </location>
    <ligand>
        <name>substrate</name>
    </ligand>
</feature>
<feature type="binding site" evidence="1">
    <location>
        <begin position="97"/>
        <end position="98"/>
    </location>
    <ligand>
        <name>substrate</name>
    </ligand>
</feature>
<dbReference type="EC" id="1.7.1.13" evidence="1"/>
<dbReference type="EMBL" id="CP000319">
    <property type="protein sequence ID" value="ABE62557.1"/>
    <property type="molecule type" value="Genomic_DNA"/>
</dbReference>
<dbReference type="RefSeq" id="WP_011510239.1">
    <property type="nucleotide sequence ID" value="NC_007964.1"/>
</dbReference>
<dbReference type="SMR" id="Q1QMJ0"/>
<dbReference type="STRING" id="323097.Nham_1742"/>
<dbReference type="KEGG" id="nha:Nham_1742"/>
<dbReference type="eggNOG" id="COG0780">
    <property type="taxonomic scope" value="Bacteria"/>
</dbReference>
<dbReference type="HOGENOM" id="CLU_102489_0_1_5"/>
<dbReference type="OrthoDB" id="9789995at2"/>
<dbReference type="UniPathway" id="UPA00392"/>
<dbReference type="Proteomes" id="UP000001953">
    <property type="component" value="Chromosome"/>
</dbReference>
<dbReference type="GO" id="GO:0005737">
    <property type="term" value="C:cytoplasm"/>
    <property type="evidence" value="ECO:0007669"/>
    <property type="project" value="UniProtKB-SubCell"/>
</dbReference>
<dbReference type="GO" id="GO:0033739">
    <property type="term" value="F:preQ1 synthase activity"/>
    <property type="evidence" value="ECO:0007669"/>
    <property type="project" value="UniProtKB-UniRule"/>
</dbReference>
<dbReference type="GO" id="GO:0008616">
    <property type="term" value="P:queuosine biosynthetic process"/>
    <property type="evidence" value="ECO:0007669"/>
    <property type="project" value="UniProtKB-UniRule"/>
</dbReference>
<dbReference type="GO" id="GO:0006400">
    <property type="term" value="P:tRNA modification"/>
    <property type="evidence" value="ECO:0007669"/>
    <property type="project" value="UniProtKB-UniRule"/>
</dbReference>
<dbReference type="Gene3D" id="3.30.1130.10">
    <property type="match status" value="1"/>
</dbReference>
<dbReference type="HAMAP" id="MF_00818">
    <property type="entry name" value="QueF_type1"/>
    <property type="match status" value="1"/>
</dbReference>
<dbReference type="InterPro" id="IPR043133">
    <property type="entry name" value="GTP-CH-I_C/QueF"/>
</dbReference>
<dbReference type="InterPro" id="IPR050084">
    <property type="entry name" value="NADPH_dep_7-cyano-7-deazaG_red"/>
</dbReference>
<dbReference type="InterPro" id="IPR029500">
    <property type="entry name" value="QueF"/>
</dbReference>
<dbReference type="InterPro" id="IPR016856">
    <property type="entry name" value="QueF_type1"/>
</dbReference>
<dbReference type="NCBIfam" id="TIGR03139">
    <property type="entry name" value="QueF-II"/>
    <property type="match status" value="1"/>
</dbReference>
<dbReference type="PANTHER" id="PTHR34354">
    <property type="entry name" value="NADPH-DEPENDENT 7-CYANO-7-DEAZAGUANINE REDUCTASE"/>
    <property type="match status" value="1"/>
</dbReference>
<dbReference type="PANTHER" id="PTHR34354:SF1">
    <property type="entry name" value="NADPH-DEPENDENT 7-CYANO-7-DEAZAGUANINE REDUCTASE"/>
    <property type="match status" value="1"/>
</dbReference>
<dbReference type="Pfam" id="PF14489">
    <property type="entry name" value="QueF"/>
    <property type="match status" value="1"/>
</dbReference>
<dbReference type="SUPFAM" id="SSF55620">
    <property type="entry name" value="Tetrahydrobiopterin biosynthesis enzymes-like"/>
    <property type="match status" value="1"/>
</dbReference>
<comment type="function">
    <text evidence="1">Catalyzes the NADPH-dependent reduction of 7-cyano-7-deazaguanine (preQ0) to 7-aminomethyl-7-deazaguanine (preQ1).</text>
</comment>
<comment type="catalytic activity">
    <reaction evidence="1">
        <text>7-aminomethyl-7-carbaguanine + 2 NADP(+) = 7-cyano-7-deazaguanine + 2 NADPH + 3 H(+)</text>
        <dbReference type="Rhea" id="RHEA:13409"/>
        <dbReference type="ChEBI" id="CHEBI:15378"/>
        <dbReference type="ChEBI" id="CHEBI:45075"/>
        <dbReference type="ChEBI" id="CHEBI:57783"/>
        <dbReference type="ChEBI" id="CHEBI:58349"/>
        <dbReference type="ChEBI" id="CHEBI:58703"/>
        <dbReference type="EC" id="1.7.1.13"/>
    </reaction>
</comment>
<comment type="pathway">
    <text evidence="1">tRNA modification; tRNA-queuosine biosynthesis.</text>
</comment>
<comment type="subcellular location">
    <subcellularLocation>
        <location evidence="1">Cytoplasm</location>
    </subcellularLocation>
</comment>
<comment type="similarity">
    <text evidence="1">Belongs to the GTP cyclohydrolase I family. QueF type 1 subfamily.</text>
</comment>
<proteinExistence type="inferred from homology"/>
<reference key="1">
    <citation type="submission" date="2006-03" db="EMBL/GenBank/DDBJ databases">
        <title>Complete sequence of chromosome of Nitrobacter hamburgensis X14.</title>
        <authorList>
            <consortium name="US DOE Joint Genome Institute"/>
            <person name="Copeland A."/>
            <person name="Lucas S."/>
            <person name="Lapidus A."/>
            <person name="Barry K."/>
            <person name="Detter J.C."/>
            <person name="Glavina del Rio T."/>
            <person name="Hammon N."/>
            <person name="Israni S."/>
            <person name="Dalin E."/>
            <person name="Tice H."/>
            <person name="Pitluck S."/>
            <person name="Chain P."/>
            <person name="Malfatti S."/>
            <person name="Shin M."/>
            <person name="Vergez L."/>
            <person name="Schmutz J."/>
            <person name="Larimer F."/>
            <person name="Land M."/>
            <person name="Hauser L."/>
            <person name="Kyrpides N."/>
            <person name="Ivanova N."/>
            <person name="Ward B."/>
            <person name="Arp D."/>
            <person name="Klotz M."/>
            <person name="Stein L."/>
            <person name="O'Mullan G."/>
            <person name="Starkenburg S."/>
            <person name="Sayavedra L."/>
            <person name="Poret-Peterson A.T."/>
            <person name="Gentry M.E."/>
            <person name="Bruce D."/>
            <person name="Richardson P."/>
        </authorList>
    </citation>
    <scope>NUCLEOTIDE SEQUENCE [LARGE SCALE GENOMIC DNA]</scope>
    <source>
        <strain>DSM 10229 / NCIMB 13809 / X14</strain>
    </source>
</reference>
<keyword id="KW-0963">Cytoplasm</keyword>
<keyword id="KW-0521">NADP</keyword>
<keyword id="KW-0560">Oxidoreductase</keyword>
<keyword id="KW-0671">Queuosine biosynthesis</keyword>
<keyword id="KW-1185">Reference proteome</keyword>
<name>QUEF_NITHX</name>
<accession>Q1QMJ0</accession>
<protein>
    <recommendedName>
        <fullName evidence="1">NADPH-dependent 7-cyano-7-deazaguanine reductase</fullName>
        <ecNumber evidence="1">1.7.1.13</ecNumber>
    </recommendedName>
    <alternativeName>
        <fullName evidence="1">7-cyano-7-carbaguanine reductase</fullName>
    </alternativeName>
    <alternativeName>
        <fullName evidence="1">NADPH-dependent nitrile oxidoreductase</fullName>
    </alternativeName>
    <alternativeName>
        <fullName evidence="1">PreQ(0) reductase</fullName>
    </alternativeName>
</protein>
<organism>
    <name type="scientific">Nitrobacter hamburgensis (strain DSM 10229 / NCIMB 13809 / X14)</name>
    <dbReference type="NCBI Taxonomy" id="323097"/>
    <lineage>
        <taxon>Bacteria</taxon>
        <taxon>Pseudomonadati</taxon>
        <taxon>Pseudomonadota</taxon>
        <taxon>Alphaproteobacteria</taxon>
        <taxon>Hyphomicrobiales</taxon>
        <taxon>Nitrobacteraceae</taxon>
        <taxon>Nitrobacter</taxon>
    </lineage>
</organism>
<gene>
    <name evidence="1" type="primary">queF</name>
    <name type="ordered locus">Nham_1742</name>
</gene>
<evidence type="ECO:0000255" key="1">
    <source>
        <dbReference type="HAMAP-Rule" id="MF_00818"/>
    </source>
</evidence>